<organism>
    <name type="scientific">Photorhabdus laumondii subsp. laumondii (strain DSM 15139 / CIP 105565 / TT01)</name>
    <name type="common">Photorhabdus luminescens subsp. laumondii</name>
    <dbReference type="NCBI Taxonomy" id="243265"/>
    <lineage>
        <taxon>Bacteria</taxon>
        <taxon>Pseudomonadati</taxon>
        <taxon>Pseudomonadota</taxon>
        <taxon>Gammaproteobacteria</taxon>
        <taxon>Enterobacterales</taxon>
        <taxon>Morganellaceae</taxon>
        <taxon>Photorhabdus</taxon>
    </lineage>
</organism>
<accession>Q7N231</accession>
<name>PEPB_PHOLL</name>
<evidence type="ECO:0000255" key="1">
    <source>
        <dbReference type="HAMAP-Rule" id="MF_00504"/>
    </source>
</evidence>
<dbReference type="EC" id="3.4.11.23" evidence="1"/>
<dbReference type="EMBL" id="BX571870">
    <property type="protein sequence ID" value="CAE15650.1"/>
    <property type="molecule type" value="Genomic_DNA"/>
</dbReference>
<dbReference type="RefSeq" id="WP_011147471.1">
    <property type="nucleotide sequence ID" value="NC_005126.1"/>
</dbReference>
<dbReference type="SMR" id="Q7N231"/>
<dbReference type="STRING" id="243265.plu3276"/>
<dbReference type="MEROPS" id="M17.004"/>
<dbReference type="GeneID" id="48849531"/>
<dbReference type="KEGG" id="plu:plu3276"/>
<dbReference type="eggNOG" id="COG0260">
    <property type="taxonomic scope" value="Bacteria"/>
</dbReference>
<dbReference type="HOGENOM" id="CLU_013734_7_1_6"/>
<dbReference type="OrthoDB" id="9809354at2"/>
<dbReference type="Proteomes" id="UP000002514">
    <property type="component" value="Chromosome"/>
</dbReference>
<dbReference type="GO" id="GO:0005737">
    <property type="term" value="C:cytoplasm"/>
    <property type="evidence" value="ECO:0007669"/>
    <property type="project" value="UniProtKB-SubCell"/>
</dbReference>
<dbReference type="GO" id="GO:0030145">
    <property type="term" value="F:manganese ion binding"/>
    <property type="evidence" value="ECO:0007669"/>
    <property type="project" value="UniProtKB-UniRule"/>
</dbReference>
<dbReference type="GO" id="GO:0070006">
    <property type="term" value="F:metalloaminopeptidase activity"/>
    <property type="evidence" value="ECO:0007669"/>
    <property type="project" value="InterPro"/>
</dbReference>
<dbReference type="GO" id="GO:0006508">
    <property type="term" value="P:proteolysis"/>
    <property type="evidence" value="ECO:0007669"/>
    <property type="project" value="UniProtKB-UniRule"/>
</dbReference>
<dbReference type="CDD" id="cd00433">
    <property type="entry name" value="Peptidase_M17"/>
    <property type="match status" value="1"/>
</dbReference>
<dbReference type="FunFam" id="3.40.630.10:FF:000037">
    <property type="entry name" value="Peptidase B"/>
    <property type="match status" value="1"/>
</dbReference>
<dbReference type="Gene3D" id="3.40.630.10">
    <property type="entry name" value="Zn peptidases"/>
    <property type="match status" value="1"/>
</dbReference>
<dbReference type="HAMAP" id="MF_00504">
    <property type="entry name" value="Aminopeptidase_M17"/>
    <property type="match status" value="1"/>
</dbReference>
<dbReference type="InterPro" id="IPR011356">
    <property type="entry name" value="Leucine_aapep/pepB"/>
</dbReference>
<dbReference type="InterPro" id="IPR047620">
    <property type="entry name" value="M17_PepB-like_N"/>
</dbReference>
<dbReference type="InterPro" id="IPR008330">
    <property type="entry name" value="Pept_M17_PepB"/>
</dbReference>
<dbReference type="InterPro" id="IPR000819">
    <property type="entry name" value="Peptidase_M17_C"/>
</dbReference>
<dbReference type="NCBIfam" id="NF003450">
    <property type="entry name" value="PRK05015.1"/>
    <property type="match status" value="1"/>
</dbReference>
<dbReference type="PANTHER" id="PTHR11963">
    <property type="entry name" value="LEUCINE AMINOPEPTIDASE-RELATED"/>
    <property type="match status" value="1"/>
</dbReference>
<dbReference type="PANTHER" id="PTHR11963:SF20">
    <property type="entry name" value="PEPTIDASE B"/>
    <property type="match status" value="1"/>
</dbReference>
<dbReference type="Pfam" id="PF12404">
    <property type="entry name" value="DUF3663"/>
    <property type="match status" value="1"/>
</dbReference>
<dbReference type="Pfam" id="PF00883">
    <property type="entry name" value="Peptidase_M17"/>
    <property type="match status" value="1"/>
</dbReference>
<dbReference type="PIRSF" id="PIRSF036388">
    <property type="entry name" value="Ctsl_amnpptdse_B"/>
    <property type="match status" value="1"/>
</dbReference>
<dbReference type="PRINTS" id="PR00481">
    <property type="entry name" value="LAMNOPPTDASE"/>
</dbReference>
<dbReference type="SUPFAM" id="SSF53187">
    <property type="entry name" value="Zn-dependent exopeptidases"/>
    <property type="match status" value="1"/>
</dbReference>
<dbReference type="PROSITE" id="PS00631">
    <property type="entry name" value="CYTOSOL_AP"/>
    <property type="match status" value="1"/>
</dbReference>
<gene>
    <name evidence="1" type="primary">pepB</name>
    <name type="ordered locus">plu3276</name>
</gene>
<protein>
    <recommendedName>
        <fullName evidence="1">Peptidase B</fullName>
        <ecNumber evidence="1">3.4.11.23</ecNumber>
    </recommendedName>
    <alternativeName>
        <fullName evidence="1">Aminopeptidase B</fullName>
    </alternativeName>
</protein>
<feature type="chain" id="PRO_0000165839" description="Peptidase B">
    <location>
        <begin position="1"/>
        <end position="431"/>
    </location>
</feature>
<feature type="active site" evidence="1">
    <location>
        <position position="208"/>
    </location>
</feature>
<feature type="active site" evidence="1">
    <location>
        <position position="282"/>
    </location>
</feature>
<feature type="binding site" evidence="1">
    <location>
        <position position="196"/>
    </location>
    <ligand>
        <name>Mn(2+)</name>
        <dbReference type="ChEBI" id="CHEBI:29035"/>
        <label>2</label>
    </ligand>
</feature>
<feature type="binding site" evidence="1">
    <location>
        <position position="201"/>
    </location>
    <ligand>
        <name>Mn(2+)</name>
        <dbReference type="ChEBI" id="CHEBI:29035"/>
        <label>1</label>
    </ligand>
</feature>
<feature type="binding site" evidence="1">
    <location>
        <position position="201"/>
    </location>
    <ligand>
        <name>Mn(2+)</name>
        <dbReference type="ChEBI" id="CHEBI:29035"/>
        <label>2</label>
    </ligand>
</feature>
<feature type="binding site" evidence="1">
    <location>
        <position position="219"/>
    </location>
    <ligand>
        <name>Mn(2+)</name>
        <dbReference type="ChEBI" id="CHEBI:29035"/>
        <label>2</label>
    </ligand>
</feature>
<feature type="binding site" evidence="1">
    <location>
        <position position="278"/>
    </location>
    <ligand>
        <name>Mn(2+)</name>
        <dbReference type="ChEBI" id="CHEBI:29035"/>
        <label>1</label>
    </ligand>
</feature>
<feature type="binding site" evidence="1">
    <location>
        <position position="280"/>
    </location>
    <ligand>
        <name>Mn(2+)</name>
        <dbReference type="ChEBI" id="CHEBI:29035"/>
        <label>1</label>
    </ligand>
</feature>
<feature type="binding site" evidence="1">
    <location>
        <position position="280"/>
    </location>
    <ligand>
        <name>Mn(2+)</name>
        <dbReference type="ChEBI" id="CHEBI:29035"/>
        <label>2</label>
    </ligand>
</feature>
<sequence length="431" mass="46534">MTKQIMPITLSYEPAAACWGEKALISSSEQGVMVHLVGKGKLGAVQRAGRKIDGQGIRHVALVGEGWDLEKSWAFWQGFRAPKGNRSIEWPQLPAAEKQELESRIKIIDWVRDTINMSAEELGPEQLAKRAIDLMCGMACESVSYRIIKGEDLREQGYTGIHTVGRGSSRDPILLALDYNPTGNPQAPVFACLVGKGVTFDTGGYSLKQSSFMDSMKSDMGGAATLTGALALAISRGLKQRVKLFLCIADNMVSGNAFKLGDVIHYRNGKSVEVMNTDAEGRLVLADGLIDASKEKAKLIIDAATLTGAAKTAVGNDYHSVLSFDDKLADDLLTAAASENELFWRLPLAEFHRSQLPSNFADLNNVAASPHTAGASTAAAFLSHFVEEYQKGWIHIDCSATYRKSAVEHWSAGATGYGVRSIANLLLAKAK</sequence>
<reference key="1">
    <citation type="journal article" date="2003" name="Nat. Biotechnol.">
        <title>The genome sequence of the entomopathogenic bacterium Photorhabdus luminescens.</title>
        <authorList>
            <person name="Duchaud E."/>
            <person name="Rusniok C."/>
            <person name="Frangeul L."/>
            <person name="Buchrieser C."/>
            <person name="Givaudan A."/>
            <person name="Taourit S."/>
            <person name="Bocs S."/>
            <person name="Boursaux-Eude C."/>
            <person name="Chandler M."/>
            <person name="Charles J.-F."/>
            <person name="Dassa E."/>
            <person name="Derose R."/>
            <person name="Derzelle S."/>
            <person name="Freyssinet G."/>
            <person name="Gaudriault S."/>
            <person name="Medigue C."/>
            <person name="Lanois A."/>
            <person name="Powell K."/>
            <person name="Siguier P."/>
            <person name="Vincent R."/>
            <person name="Wingate V."/>
            <person name="Zouine M."/>
            <person name="Glaser P."/>
            <person name="Boemare N."/>
            <person name="Danchin A."/>
            <person name="Kunst F."/>
        </authorList>
    </citation>
    <scope>NUCLEOTIDE SEQUENCE [LARGE SCALE GENOMIC DNA]</scope>
    <source>
        <strain>DSM 15139 / CIP 105565 / TT01</strain>
    </source>
</reference>
<proteinExistence type="inferred from homology"/>
<comment type="function">
    <text evidence="1">Probably plays an important role in intracellular peptide degradation.</text>
</comment>
<comment type="catalytic activity">
    <reaction evidence="1">
        <text>Release of an N-terminal amino acid, Xaa, from a peptide or arylamide. Xaa is preferably Glu or Asp but may be other amino acids, including Leu, Met, His, Cys and Gln.</text>
        <dbReference type="EC" id="3.4.11.23"/>
    </reaction>
</comment>
<comment type="cofactor">
    <cofactor evidence="1">
        <name>Mn(2+)</name>
        <dbReference type="ChEBI" id="CHEBI:29035"/>
    </cofactor>
    <text evidence="1">Binds 2 manganese ions per subunit.</text>
</comment>
<comment type="subunit">
    <text evidence="1">Homohexamer.</text>
</comment>
<comment type="subcellular location">
    <subcellularLocation>
        <location evidence="1">Cytoplasm</location>
    </subcellularLocation>
</comment>
<comment type="similarity">
    <text evidence="1">Belongs to the peptidase M17 family.</text>
</comment>
<keyword id="KW-0031">Aminopeptidase</keyword>
<keyword id="KW-0963">Cytoplasm</keyword>
<keyword id="KW-0378">Hydrolase</keyword>
<keyword id="KW-0464">Manganese</keyword>
<keyword id="KW-0479">Metal-binding</keyword>
<keyword id="KW-0645">Protease</keyword>
<keyword id="KW-1185">Reference proteome</keyword>